<protein>
    <recommendedName>
        <fullName>Protein drumstick</fullName>
    </recommendedName>
</protein>
<comment type="function">
    <text evidence="3 4 6 7">Putative transcription factor. May function redundantly with odd and sob in leg joint formation during the larval stages, acting downstream of Notch activation. Acts in a hierarchy during foregut and hindgut patterning and morphogenesis, antagonizing lin to relieve the repressive effect on bowl. Involved in cell rearrangement during elongation of the embryonic hindgut. Regulates expression of hindgut patterning genes to establish the small intestine region of the embryonic hindgut. Required in the foregut for spatially localized gene expression and morphogenesis of the proventriculus.</text>
</comment>
<comment type="subunit">
    <text evidence="4">Interacts with lin.</text>
</comment>
<comment type="subcellular location">
    <subcellularLocation>
        <location evidence="8">Nucleus</location>
    </subcellularLocation>
</comment>
<comment type="tissue specificity">
    <text evidence="3 4 6 7">Has two temporally distinct modes of expression during early embryogenesis. Expressed in seven stripes at the blastoderm stage, then during gastrulation the seven primary stripes are supplemented by seven secondary stripes which appear in alternate segments. This results in the labelling of each of the 14 segments in the extended germ band. Also expressed in the anterior gut primordium starting at stage 5 and in the embryonic foregut (including the proventriculus) and hindgut. Strongly expressed in a segmentally repeated pattern in the leg disk at the distal edge of each presumptive leg segment except in tarsal segments 1 to 4. In early third instar leg disks, expression starts in a proximal ring corresponding to the presumptive coxa. The number of segmental rings progressively increases to 5 by the end of larval development.</text>
</comment>
<comment type="domain">
    <text>The C2H2-type domain 1 is essential for binding to and repressing lin, while the C2H2-type domain 2 contributes to lin binding.</text>
</comment>
<name>DRM_DROME</name>
<sequence>MFAVMRIDNDDCRSDFRRKMRPKCEFICKYCQRRFTKPYNLMIHERTHKSPEITYSCEVCGKYFKQRDNLRQHRCSQCVWR</sequence>
<gene>
    <name evidence="9" type="primary">drm</name>
    <name type="ORF">CG10016</name>
</gene>
<accession>Q9VQS6</accession>
<accession>A4V041</accession>
<accession>Q49UC1</accession>
<accession>Q8SZH7</accession>
<feature type="chain" id="PRO_0000046920" description="Protein drumstick">
    <location>
        <begin position="1"/>
        <end position="81"/>
    </location>
</feature>
<feature type="zinc finger region" description="C2H2-type 1" evidence="1">
    <location>
        <begin position="26"/>
        <end position="48"/>
    </location>
</feature>
<feature type="zinc finger region" description="C2H2-type 2; degenerate" evidence="1">
    <location>
        <begin position="55"/>
        <end position="75"/>
    </location>
</feature>
<feature type="mutagenesis site" description="In drm5; foregut proventriculus morphologically and functionally defective." evidence="4">
    <original>E</original>
    <variation>K</variation>
    <location>
        <position position="25"/>
    </location>
</feature>
<feature type="mutagenesis site" description="In drm4; foregut proventriculus morphologically and functionally defective." evidence="4">
    <original>E</original>
    <variation>K</variation>
    <location>
        <position position="45"/>
    </location>
</feature>
<feature type="mutagenesis site" description="In drm6; foregut proventriculus and hindgut morphologically and functionally defective. Abolishes lin binding. Abolishes lin-inhibiting activity." evidence="4">
    <original>R</original>
    <variation>C</variation>
    <location>
        <position position="46"/>
    </location>
</feature>
<feature type="mutagenesis site" description="In drm2; foregut proventriculus morphologically and functionally defective." evidence="4">
    <original>R</original>
    <variation>H</variation>
    <location>
        <position position="46"/>
    </location>
</feature>
<feature type="mutagenesis site" description="Reduces lin binding. No effect on lin-inhibiting activity." evidence="4">
    <original>C</original>
    <variation>G</variation>
    <location>
        <position position="57"/>
    </location>
</feature>
<evidence type="ECO:0000255" key="1">
    <source>
        <dbReference type="PROSITE-ProRule" id="PRU00042"/>
    </source>
</evidence>
<evidence type="ECO:0000269" key="2">
    <source>
    </source>
</evidence>
<evidence type="ECO:0000269" key="3">
    <source>
    </source>
</evidence>
<evidence type="ECO:0000269" key="4">
    <source>
    </source>
</evidence>
<evidence type="ECO:0000269" key="5">
    <source>
    </source>
</evidence>
<evidence type="ECO:0000269" key="6">
    <source>
    </source>
</evidence>
<evidence type="ECO:0000269" key="7">
    <source>
    </source>
</evidence>
<evidence type="ECO:0000305" key="8"/>
<evidence type="ECO:0000312" key="9">
    <source>
        <dbReference type="EMBL" id="AAF51088.2"/>
    </source>
</evidence>
<reference evidence="9" key="1">
    <citation type="journal article" date="2000" name="Science">
        <title>The genome sequence of Drosophila melanogaster.</title>
        <authorList>
            <person name="Adams M.D."/>
            <person name="Celniker S.E."/>
            <person name="Holt R.A."/>
            <person name="Evans C.A."/>
            <person name="Gocayne J.D."/>
            <person name="Amanatides P.G."/>
            <person name="Scherer S.E."/>
            <person name="Li P.W."/>
            <person name="Hoskins R.A."/>
            <person name="Galle R.F."/>
            <person name="George R.A."/>
            <person name="Lewis S.E."/>
            <person name="Richards S."/>
            <person name="Ashburner M."/>
            <person name="Henderson S.N."/>
            <person name="Sutton G.G."/>
            <person name="Wortman J.R."/>
            <person name="Yandell M.D."/>
            <person name="Zhang Q."/>
            <person name="Chen L.X."/>
            <person name="Brandon R.C."/>
            <person name="Rogers Y.-H.C."/>
            <person name="Blazej R.G."/>
            <person name="Champe M."/>
            <person name="Pfeiffer B.D."/>
            <person name="Wan K.H."/>
            <person name="Doyle C."/>
            <person name="Baxter E.G."/>
            <person name="Helt G."/>
            <person name="Nelson C.R."/>
            <person name="Miklos G.L.G."/>
            <person name="Abril J.F."/>
            <person name="Agbayani A."/>
            <person name="An H.-J."/>
            <person name="Andrews-Pfannkoch C."/>
            <person name="Baldwin D."/>
            <person name="Ballew R.M."/>
            <person name="Basu A."/>
            <person name="Baxendale J."/>
            <person name="Bayraktaroglu L."/>
            <person name="Beasley E.M."/>
            <person name="Beeson K.Y."/>
            <person name="Benos P.V."/>
            <person name="Berman B.P."/>
            <person name="Bhandari D."/>
            <person name="Bolshakov S."/>
            <person name="Borkova D."/>
            <person name="Botchan M.R."/>
            <person name="Bouck J."/>
            <person name="Brokstein P."/>
            <person name="Brottier P."/>
            <person name="Burtis K.C."/>
            <person name="Busam D.A."/>
            <person name="Butler H."/>
            <person name="Cadieu E."/>
            <person name="Center A."/>
            <person name="Chandra I."/>
            <person name="Cherry J.M."/>
            <person name="Cawley S."/>
            <person name="Dahlke C."/>
            <person name="Davenport L.B."/>
            <person name="Davies P."/>
            <person name="de Pablos B."/>
            <person name="Delcher A."/>
            <person name="Deng Z."/>
            <person name="Mays A.D."/>
            <person name="Dew I."/>
            <person name="Dietz S.M."/>
            <person name="Dodson K."/>
            <person name="Doup L.E."/>
            <person name="Downes M."/>
            <person name="Dugan-Rocha S."/>
            <person name="Dunkov B.C."/>
            <person name="Dunn P."/>
            <person name="Durbin K.J."/>
            <person name="Evangelista C.C."/>
            <person name="Ferraz C."/>
            <person name="Ferriera S."/>
            <person name="Fleischmann W."/>
            <person name="Fosler C."/>
            <person name="Gabrielian A.E."/>
            <person name="Garg N.S."/>
            <person name="Gelbart W.M."/>
            <person name="Glasser K."/>
            <person name="Glodek A."/>
            <person name="Gong F."/>
            <person name="Gorrell J.H."/>
            <person name="Gu Z."/>
            <person name="Guan P."/>
            <person name="Harris M."/>
            <person name="Harris N.L."/>
            <person name="Harvey D.A."/>
            <person name="Heiman T.J."/>
            <person name="Hernandez J.R."/>
            <person name="Houck J."/>
            <person name="Hostin D."/>
            <person name="Houston K.A."/>
            <person name="Howland T.J."/>
            <person name="Wei M.-H."/>
            <person name="Ibegwam C."/>
            <person name="Jalali M."/>
            <person name="Kalush F."/>
            <person name="Karpen G.H."/>
            <person name="Ke Z."/>
            <person name="Kennison J.A."/>
            <person name="Ketchum K.A."/>
            <person name="Kimmel B.E."/>
            <person name="Kodira C.D."/>
            <person name="Kraft C.L."/>
            <person name="Kravitz S."/>
            <person name="Kulp D."/>
            <person name="Lai Z."/>
            <person name="Lasko P."/>
            <person name="Lei Y."/>
            <person name="Levitsky A.A."/>
            <person name="Li J.H."/>
            <person name="Li Z."/>
            <person name="Liang Y."/>
            <person name="Lin X."/>
            <person name="Liu X."/>
            <person name="Mattei B."/>
            <person name="McIntosh T.C."/>
            <person name="McLeod M.P."/>
            <person name="McPherson D."/>
            <person name="Merkulov G."/>
            <person name="Milshina N.V."/>
            <person name="Mobarry C."/>
            <person name="Morris J."/>
            <person name="Moshrefi A."/>
            <person name="Mount S.M."/>
            <person name="Moy M."/>
            <person name="Murphy B."/>
            <person name="Murphy L."/>
            <person name="Muzny D.M."/>
            <person name="Nelson D.L."/>
            <person name="Nelson D.R."/>
            <person name="Nelson K.A."/>
            <person name="Nixon K."/>
            <person name="Nusskern D.R."/>
            <person name="Pacleb J.M."/>
            <person name="Palazzolo M."/>
            <person name="Pittman G.S."/>
            <person name="Pan S."/>
            <person name="Pollard J."/>
            <person name="Puri V."/>
            <person name="Reese M.G."/>
            <person name="Reinert K."/>
            <person name="Remington K."/>
            <person name="Saunders R.D.C."/>
            <person name="Scheeler F."/>
            <person name="Shen H."/>
            <person name="Shue B.C."/>
            <person name="Siden-Kiamos I."/>
            <person name="Simpson M."/>
            <person name="Skupski M.P."/>
            <person name="Smith T.J."/>
            <person name="Spier E."/>
            <person name="Spradling A.C."/>
            <person name="Stapleton M."/>
            <person name="Strong R."/>
            <person name="Sun E."/>
            <person name="Svirskas R."/>
            <person name="Tector C."/>
            <person name="Turner R."/>
            <person name="Venter E."/>
            <person name="Wang A.H."/>
            <person name="Wang X."/>
            <person name="Wang Z.-Y."/>
            <person name="Wassarman D.A."/>
            <person name="Weinstock G.M."/>
            <person name="Weissenbach J."/>
            <person name="Williams S.M."/>
            <person name="Woodage T."/>
            <person name="Worley K.C."/>
            <person name="Wu D."/>
            <person name="Yang S."/>
            <person name="Yao Q.A."/>
            <person name="Ye J."/>
            <person name="Yeh R.-F."/>
            <person name="Zaveri J.S."/>
            <person name="Zhan M."/>
            <person name="Zhang G."/>
            <person name="Zhao Q."/>
            <person name="Zheng L."/>
            <person name="Zheng X.H."/>
            <person name="Zhong F.N."/>
            <person name="Zhong W."/>
            <person name="Zhou X."/>
            <person name="Zhu S.C."/>
            <person name="Zhu X."/>
            <person name="Smith H.O."/>
            <person name="Gibbs R.A."/>
            <person name="Myers E.W."/>
            <person name="Rubin G.M."/>
            <person name="Venter J.C."/>
        </authorList>
    </citation>
    <scope>NUCLEOTIDE SEQUENCE [LARGE SCALE GENOMIC DNA]</scope>
    <source>
        <strain evidence="2">Berkeley</strain>
    </source>
</reference>
<reference evidence="8 9" key="2">
    <citation type="journal article" date="2002" name="Genome Biol.">
        <title>Annotation of the Drosophila melanogaster euchromatic genome: a systematic review.</title>
        <authorList>
            <person name="Misra S."/>
            <person name="Crosby M.A."/>
            <person name="Mungall C.J."/>
            <person name="Matthews B.B."/>
            <person name="Campbell K.S."/>
            <person name="Hradecky P."/>
            <person name="Huang Y."/>
            <person name="Kaminker J.S."/>
            <person name="Millburn G.H."/>
            <person name="Prochnik S.E."/>
            <person name="Smith C.D."/>
            <person name="Tupy J.L."/>
            <person name="Whitfield E.J."/>
            <person name="Bayraktaroglu L."/>
            <person name="Berman B.P."/>
            <person name="Bettencourt B.R."/>
            <person name="Celniker S.E."/>
            <person name="de Grey A.D.N.J."/>
            <person name="Drysdale R.A."/>
            <person name="Harris N.L."/>
            <person name="Richter J."/>
            <person name="Russo S."/>
            <person name="Schroeder A.J."/>
            <person name="Shu S.Q."/>
            <person name="Stapleton M."/>
            <person name="Yamada C."/>
            <person name="Ashburner M."/>
            <person name="Gelbart W.M."/>
            <person name="Rubin G.M."/>
            <person name="Lewis S.E."/>
        </authorList>
    </citation>
    <scope>GENOME REANNOTATION</scope>
    <source>
        <strain>Berkeley</strain>
    </source>
</reference>
<reference key="3">
    <citation type="journal article" date="2002" name="Genome Biol.">
        <title>A Drosophila full-length cDNA resource.</title>
        <authorList>
            <person name="Stapleton M."/>
            <person name="Carlson J.W."/>
            <person name="Brokstein P."/>
            <person name="Yu C."/>
            <person name="Champe M."/>
            <person name="George R.A."/>
            <person name="Guarin H."/>
            <person name="Kronmiller B."/>
            <person name="Pacleb J.M."/>
            <person name="Park S."/>
            <person name="Wan K.H."/>
            <person name="Rubin G.M."/>
            <person name="Celniker S.E."/>
        </authorList>
    </citation>
    <scope>NUCLEOTIDE SEQUENCE [LARGE SCALE MRNA]</scope>
    <source>
        <strain>Berkeley</strain>
        <tissue evidence="5">Embryo</tissue>
    </source>
</reference>
<reference key="4">
    <citation type="submission" date="2005-08" db="EMBL/GenBank/DDBJ databases">
        <authorList>
            <person name="Stapleton M."/>
            <person name="Carlson J.W."/>
            <person name="Chavez C."/>
            <person name="Frise E."/>
            <person name="George R.A."/>
            <person name="Pacleb J.M."/>
            <person name="Park S."/>
            <person name="Wan K.H."/>
            <person name="Yu C."/>
            <person name="Celniker S.E."/>
        </authorList>
    </citation>
    <scope>SEQUENCE REVISION</scope>
</reference>
<reference evidence="8" key="5">
    <citation type="journal article" date="2001" name="Dev. Biol.">
        <title>Drumstick, bowl, and lines are required for patterning and cell rearrangement in the Drosophila embryonic hindgut.</title>
        <authorList>
            <person name="Iwaki D.D."/>
            <person name="Johansen K.A."/>
            <person name="Singer J.B."/>
            <person name="Lengyel J.A."/>
        </authorList>
    </citation>
    <scope>FUNCTION</scope>
    <scope>TISSUE SPECIFICITY</scope>
</reference>
<reference evidence="8" key="6">
    <citation type="journal article" date="2002" name="Development">
        <title>Drumstick is a zinc finger protein that antagonizes Lines to control patterning and morphogenesis of the Drosophila hindgut.</title>
        <authorList>
            <person name="Green R.B."/>
            <person name="Hatini V."/>
            <person name="Johansen K.A."/>
            <person name="Liu X.-J."/>
            <person name="Lengyel J.A."/>
        </authorList>
    </citation>
    <scope>FUNCTION</scope>
    <scope>TISSUE SPECIFICITY</scope>
    <scope>INTERACTION WITH LIN</scope>
    <scope>MUTAGENESIS OF GLU-25; GLU-45; ARG-46 AND CYS-57</scope>
</reference>
<reference evidence="8" key="7">
    <citation type="journal article" date="2003" name="Dev. Biol.">
        <title>The odd-skipped family of zinc finger genes promotes Drosophila leg segmentation.</title>
        <authorList>
            <person name="Hao I."/>
            <person name="Green R.B."/>
            <person name="Dunaevsky O."/>
            <person name="Lengyel J.A."/>
            <person name="Rauskolb C."/>
        </authorList>
    </citation>
    <scope>FUNCTION</scope>
    <scope>TISSUE SPECIFICITY</scope>
</reference>
<reference evidence="8" key="8">
    <citation type="journal article" date="2003" name="Mech. Dev.">
        <title>The Drm-Bowl-Lin relief-of-repression hierarchy controls fore- and hindgut patterning and morphogenesis.</title>
        <authorList>
            <person name="Johansen K.A."/>
            <person name="Green R.B."/>
            <person name="Iwaki D.D."/>
            <person name="Hernandez J.B."/>
            <person name="Lengyel J.A."/>
        </authorList>
    </citation>
    <scope>FUNCTION</scope>
    <scope>TISSUE SPECIFICITY</scope>
</reference>
<keyword id="KW-0217">Developmental protein</keyword>
<keyword id="KW-0238">DNA-binding</keyword>
<keyword id="KW-0479">Metal-binding</keyword>
<keyword id="KW-0539">Nucleus</keyword>
<keyword id="KW-0562">Pair-rule protein</keyword>
<keyword id="KW-1185">Reference proteome</keyword>
<keyword id="KW-0677">Repeat</keyword>
<keyword id="KW-0804">Transcription</keyword>
<keyword id="KW-0805">Transcription regulation</keyword>
<keyword id="KW-0862">Zinc</keyword>
<keyword id="KW-0863">Zinc-finger</keyword>
<organism>
    <name type="scientific">Drosophila melanogaster</name>
    <name type="common">Fruit fly</name>
    <dbReference type="NCBI Taxonomy" id="7227"/>
    <lineage>
        <taxon>Eukaryota</taxon>
        <taxon>Metazoa</taxon>
        <taxon>Ecdysozoa</taxon>
        <taxon>Arthropoda</taxon>
        <taxon>Hexapoda</taxon>
        <taxon>Insecta</taxon>
        <taxon>Pterygota</taxon>
        <taxon>Neoptera</taxon>
        <taxon>Endopterygota</taxon>
        <taxon>Diptera</taxon>
        <taxon>Brachycera</taxon>
        <taxon>Muscomorpha</taxon>
        <taxon>Ephydroidea</taxon>
        <taxon>Drosophilidae</taxon>
        <taxon>Drosophila</taxon>
        <taxon>Sophophora</taxon>
    </lineage>
</organism>
<proteinExistence type="evidence at protein level"/>
<dbReference type="EMBL" id="AE014134">
    <property type="protein sequence ID" value="AAF51088.2"/>
    <property type="molecule type" value="Genomic_DNA"/>
</dbReference>
<dbReference type="EMBL" id="AE014134">
    <property type="protein sequence ID" value="AAN10375.1"/>
    <property type="molecule type" value="Genomic_DNA"/>
</dbReference>
<dbReference type="EMBL" id="AY070883">
    <property type="protein sequence ID" value="AAZ41785.1"/>
    <property type="molecule type" value="mRNA"/>
</dbReference>
<dbReference type="RefSeq" id="NP_536788.2">
    <property type="nucleotide sequence ID" value="NM_080527.3"/>
</dbReference>
<dbReference type="RefSeq" id="NP_722921.1">
    <property type="nucleotide sequence ID" value="NM_164545.2"/>
</dbReference>
<dbReference type="SMR" id="Q9VQS6"/>
<dbReference type="BioGRID" id="72396">
    <property type="interactions" value="68"/>
</dbReference>
<dbReference type="FunCoup" id="Q9VQS6">
    <property type="interactions" value="1"/>
</dbReference>
<dbReference type="IntAct" id="Q9VQS6">
    <property type="interactions" value="63"/>
</dbReference>
<dbReference type="STRING" id="7227.FBpp0311097"/>
<dbReference type="PaxDb" id="7227-FBpp0077219"/>
<dbReference type="DNASU" id="49638"/>
<dbReference type="EnsemblMetazoa" id="FBtr0077530">
    <property type="protein sequence ID" value="FBpp0077219"/>
    <property type="gene ID" value="FBgn0024244"/>
</dbReference>
<dbReference type="EnsemblMetazoa" id="FBtr0077531">
    <property type="protein sequence ID" value="FBpp0077220"/>
    <property type="gene ID" value="FBgn0024244"/>
</dbReference>
<dbReference type="GeneID" id="49638"/>
<dbReference type="KEGG" id="dme:Dmel_CG10016"/>
<dbReference type="UCSC" id="CG10016-RA">
    <property type="organism name" value="d. melanogaster"/>
</dbReference>
<dbReference type="AGR" id="FB:FBgn0024244"/>
<dbReference type="CTD" id="49638"/>
<dbReference type="FlyBase" id="FBgn0024244">
    <property type="gene designation" value="drm"/>
</dbReference>
<dbReference type="VEuPathDB" id="VectorBase:FBgn0024244"/>
<dbReference type="eggNOG" id="KOG1721">
    <property type="taxonomic scope" value="Eukaryota"/>
</dbReference>
<dbReference type="GeneTree" id="ENSGT00940000172968"/>
<dbReference type="HOGENOM" id="CLU_2576967_0_0_1"/>
<dbReference type="InParanoid" id="Q9VQS6"/>
<dbReference type="OMA" id="RTHKDDV"/>
<dbReference type="OrthoDB" id="9451254at2759"/>
<dbReference type="PhylomeDB" id="Q9VQS6"/>
<dbReference type="BioGRID-ORCS" id="49638">
    <property type="hits" value="0 hits in 1 CRISPR screen"/>
</dbReference>
<dbReference type="ChiTaRS" id="drm">
    <property type="organism name" value="fly"/>
</dbReference>
<dbReference type="GenomeRNAi" id="49638"/>
<dbReference type="PRO" id="PR:Q9VQS6"/>
<dbReference type="Proteomes" id="UP000000803">
    <property type="component" value="Chromosome 2L"/>
</dbReference>
<dbReference type="Bgee" id="FBgn0024244">
    <property type="expression patterns" value="Expressed in adult Malpighian tubule principal cell of lower ureter in Malpighian tubule and 85 other cell types or tissues"/>
</dbReference>
<dbReference type="ExpressionAtlas" id="Q9VQS6">
    <property type="expression patterns" value="baseline and differential"/>
</dbReference>
<dbReference type="GO" id="GO:0005634">
    <property type="term" value="C:nucleus"/>
    <property type="evidence" value="ECO:0007669"/>
    <property type="project" value="UniProtKB-SubCell"/>
</dbReference>
<dbReference type="GO" id="GO:0003677">
    <property type="term" value="F:DNA binding"/>
    <property type="evidence" value="ECO:0007669"/>
    <property type="project" value="UniProtKB-KW"/>
</dbReference>
<dbReference type="GO" id="GO:0008270">
    <property type="term" value="F:zinc ion binding"/>
    <property type="evidence" value="ECO:0007669"/>
    <property type="project" value="UniProtKB-KW"/>
</dbReference>
<dbReference type="GO" id="GO:0048565">
    <property type="term" value="P:digestive tract development"/>
    <property type="evidence" value="ECO:0000314"/>
    <property type="project" value="FlyBase"/>
</dbReference>
<dbReference type="GO" id="GO:0048617">
    <property type="term" value="P:embryonic foregut morphogenesis"/>
    <property type="evidence" value="ECO:0000315"/>
    <property type="project" value="UniProtKB"/>
</dbReference>
<dbReference type="GO" id="GO:0048619">
    <property type="term" value="P:embryonic hindgut morphogenesis"/>
    <property type="evidence" value="ECO:0000315"/>
    <property type="project" value="UniProtKB"/>
</dbReference>
<dbReference type="GO" id="GO:0009880">
    <property type="term" value="P:embryonic pattern specification"/>
    <property type="evidence" value="ECO:0000315"/>
    <property type="project" value="UniProtKB"/>
</dbReference>
<dbReference type="GO" id="GO:0007440">
    <property type="term" value="P:foregut morphogenesis"/>
    <property type="evidence" value="ECO:0000315"/>
    <property type="project" value="FlyBase"/>
</dbReference>
<dbReference type="GO" id="GO:0007442">
    <property type="term" value="P:hindgut morphogenesis"/>
    <property type="evidence" value="ECO:0000315"/>
    <property type="project" value="FlyBase"/>
</dbReference>
<dbReference type="GO" id="GO:0016348">
    <property type="term" value="P:imaginal disc-derived leg joint morphogenesis"/>
    <property type="evidence" value="ECO:0000315"/>
    <property type="project" value="FlyBase"/>
</dbReference>
<dbReference type="GO" id="GO:0045892">
    <property type="term" value="P:negative regulation of DNA-templated transcription"/>
    <property type="evidence" value="ECO:0000250"/>
    <property type="project" value="UniProtKB"/>
</dbReference>
<dbReference type="GO" id="GO:0000122">
    <property type="term" value="P:negative regulation of transcription by RNA polymerase II"/>
    <property type="evidence" value="ECO:0000250"/>
    <property type="project" value="UniProtKB"/>
</dbReference>
<dbReference type="GO" id="GO:0007366">
    <property type="term" value="P:periodic partitioning by pair rule gene"/>
    <property type="evidence" value="ECO:0007669"/>
    <property type="project" value="UniProtKB-KW"/>
</dbReference>
<dbReference type="GO" id="GO:0045893">
    <property type="term" value="P:positive regulation of DNA-templated transcription"/>
    <property type="evidence" value="ECO:0000250"/>
    <property type="project" value="UniProtKB"/>
</dbReference>
<dbReference type="GO" id="GO:0045944">
    <property type="term" value="P:positive regulation of transcription by RNA polymerase II"/>
    <property type="evidence" value="ECO:0000250"/>
    <property type="project" value="UniProtKB"/>
</dbReference>
<dbReference type="FunFam" id="3.30.160.60:FF:001793">
    <property type="entry name" value="Blast:Protein drumstick"/>
    <property type="match status" value="1"/>
</dbReference>
<dbReference type="FunFam" id="3.30.160.60:FF:000712">
    <property type="entry name" value="Drumstick, isoform C"/>
    <property type="match status" value="1"/>
</dbReference>
<dbReference type="Gene3D" id="3.30.160.60">
    <property type="entry name" value="Classic Zinc Finger"/>
    <property type="match status" value="2"/>
</dbReference>
<dbReference type="InterPro" id="IPR050717">
    <property type="entry name" value="C2H2-ZF_Transcription_Reg"/>
</dbReference>
<dbReference type="InterPro" id="IPR036236">
    <property type="entry name" value="Znf_C2H2_sf"/>
</dbReference>
<dbReference type="InterPro" id="IPR013087">
    <property type="entry name" value="Znf_C2H2_type"/>
</dbReference>
<dbReference type="PANTHER" id="PTHR14196">
    <property type="entry name" value="ODD-SKIPPED - RELATED"/>
    <property type="match status" value="1"/>
</dbReference>
<dbReference type="PANTHER" id="PTHR14196:SF0">
    <property type="entry name" value="PROTEIN BOWEL"/>
    <property type="match status" value="1"/>
</dbReference>
<dbReference type="Pfam" id="PF00096">
    <property type="entry name" value="zf-C2H2"/>
    <property type="match status" value="2"/>
</dbReference>
<dbReference type="SMART" id="SM00355">
    <property type="entry name" value="ZnF_C2H2"/>
    <property type="match status" value="2"/>
</dbReference>
<dbReference type="SUPFAM" id="SSF57667">
    <property type="entry name" value="beta-beta-alpha zinc fingers"/>
    <property type="match status" value="1"/>
</dbReference>
<dbReference type="PROSITE" id="PS00028">
    <property type="entry name" value="ZINC_FINGER_C2H2_1"/>
    <property type="match status" value="1"/>
</dbReference>
<dbReference type="PROSITE" id="PS50157">
    <property type="entry name" value="ZINC_FINGER_C2H2_2"/>
    <property type="match status" value="2"/>
</dbReference>